<accession>Q03H91</accession>
<gene>
    <name evidence="1" type="primary">nagB</name>
    <name type="ordered locus">PEPE_0335</name>
</gene>
<keyword id="KW-0119">Carbohydrate metabolism</keyword>
<keyword id="KW-0378">Hydrolase</keyword>
<protein>
    <recommendedName>
        <fullName evidence="1">Glucosamine-6-phosphate deaminase</fullName>
        <ecNumber evidence="1">3.5.99.6</ecNumber>
    </recommendedName>
    <alternativeName>
        <fullName evidence="1">GlcN6P deaminase</fullName>
        <shortName evidence="1">GNPDA</shortName>
    </alternativeName>
    <alternativeName>
        <fullName evidence="1">Glucosamine-6-phosphate isomerase</fullName>
    </alternativeName>
</protein>
<evidence type="ECO:0000255" key="1">
    <source>
        <dbReference type="HAMAP-Rule" id="MF_01241"/>
    </source>
</evidence>
<comment type="function">
    <text evidence="1">Catalyzes the reversible isomerization-deamination of glucosamine 6-phosphate (GlcN6P) to form fructose 6-phosphate (Fru6P) and ammonium ion.</text>
</comment>
<comment type="catalytic activity">
    <reaction evidence="1">
        <text>alpha-D-glucosamine 6-phosphate + H2O = beta-D-fructose 6-phosphate + NH4(+)</text>
        <dbReference type="Rhea" id="RHEA:12172"/>
        <dbReference type="ChEBI" id="CHEBI:15377"/>
        <dbReference type="ChEBI" id="CHEBI:28938"/>
        <dbReference type="ChEBI" id="CHEBI:57634"/>
        <dbReference type="ChEBI" id="CHEBI:75989"/>
        <dbReference type="EC" id="3.5.99.6"/>
    </reaction>
</comment>
<comment type="pathway">
    <text evidence="1">Amino-sugar metabolism; N-acetylneuraminate degradation; D-fructose 6-phosphate from N-acetylneuraminate: step 5/5.</text>
</comment>
<comment type="similarity">
    <text evidence="1">Belongs to the glucosamine/galactosamine-6-phosphate isomerase family. NagB subfamily.</text>
</comment>
<reference key="1">
    <citation type="journal article" date="2006" name="Proc. Natl. Acad. Sci. U.S.A.">
        <title>Comparative genomics of the lactic acid bacteria.</title>
        <authorList>
            <person name="Makarova K.S."/>
            <person name="Slesarev A."/>
            <person name="Wolf Y.I."/>
            <person name="Sorokin A."/>
            <person name="Mirkin B."/>
            <person name="Koonin E.V."/>
            <person name="Pavlov A."/>
            <person name="Pavlova N."/>
            <person name="Karamychev V."/>
            <person name="Polouchine N."/>
            <person name="Shakhova V."/>
            <person name="Grigoriev I."/>
            <person name="Lou Y."/>
            <person name="Rohksar D."/>
            <person name="Lucas S."/>
            <person name="Huang K."/>
            <person name="Goodstein D.M."/>
            <person name="Hawkins T."/>
            <person name="Plengvidhya V."/>
            <person name="Welker D."/>
            <person name="Hughes J."/>
            <person name="Goh Y."/>
            <person name="Benson A."/>
            <person name="Baldwin K."/>
            <person name="Lee J.-H."/>
            <person name="Diaz-Muniz I."/>
            <person name="Dosti B."/>
            <person name="Smeianov V."/>
            <person name="Wechter W."/>
            <person name="Barabote R."/>
            <person name="Lorca G."/>
            <person name="Altermann E."/>
            <person name="Barrangou R."/>
            <person name="Ganesan B."/>
            <person name="Xie Y."/>
            <person name="Rawsthorne H."/>
            <person name="Tamir D."/>
            <person name="Parker C."/>
            <person name="Breidt F."/>
            <person name="Broadbent J.R."/>
            <person name="Hutkins R."/>
            <person name="O'Sullivan D."/>
            <person name="Steele J."/>
            <person name="Unlu G."/>
            <person name="Saier M.H. Jr."/>
            <person name="Klaenhammer T."/>
            <person name="Richardson P."/>
            <person name="Kozyavkin S."/>
            <person name="Weimer B.C."/>
            <person name="Mills D.A."/>
        </authorList>
    </citation>
    <scope>NUCLEOTIDE SEQUENCE [LARGE SCALE GENOMIC DNA]</scope>
    <source>
        <strain>ATCC 25745 / CCUG 21536 / LMG 10740 / 183-1w</strain>
    </source>
</reference>
<dbReference type="EC" id="3.5.99.6" evidence="1"/>
<dbReference type="EMBL" id="CP000422">
    <property type="protein sequence ID" value="ABJ67431.1"/>
    <property type="molecule type" value="Genomic_DNA"/>
</dbReference>
<dbReference type="RefSeq" id="WP_002832768.1">
    <property type="nucleotide sequence ID" value="NC_008525.1"/>
</dbReference>
<dbReference type="SMR" id="Q03H91"/>
<dbReference type="STRING" id="278197.PEPE_0335"/>
<dbReference type="GeneID" id="33062024"/>
<dbReference type="KEGG" id="ppe:PEPE_0335"/>
<dbReference type="eggNOG" id="COG0363">
    <property type="taxonomic scope" value="Bacteria"/>
</dbReference>
<dbReference type="HOGENOM" id="CLU_049611_1_0_9"/>
<dbReference type="OrthoDB" id="9791139at2"/>
<dbReference type="UniPathway" id="UPA00629">
    <property type="reaction ID" value="UER00684"/>
</dbReference>
<dbReference type="Proteomes" id="UP000000773">
    <property type="component" value="Chromosome"/>
</dbReference>
<dbReference type="GO" id="GO:0005737">
    <property type="term" value="C:cytoplasm"/>
    <property type="evidence" value="ECO:0007669"/>
    <property type="project" value="TreeGrafter"/>
</dbReference>
<dbReference type="GO" id="GO:0004342">
    <property type="term" value="F:glucosamine-6-phosphate deaminase activity"/>
    <property type="evidence" value="ECO:0007669"/>
    <property type="project" value="UniProtKB-UniRule"/>
</dbReference>
<dbReference type="GO" id="GO:0042802">
    <property type="term" value="F:identical protein binding"/>
    <property type="evidence" value="ECO:0007669"/>
    <property type="project" value="TreeGrafter"/>
</dbReference>
<dbReference type="GO" id="GO:0005975">
    <property type="term" value="P:carbohydrate metabolic process"/>
    <property type="evidence" value="ECO:0007669"/>
    <property type="project" value="InterPro"/>
</dbReference>
<dbReference type="GO" id="GO:0006043">
    <property type="term" value="P:glucosamine catabolic process"/>
    <property type="evidence" value="ECO:0007669"/>
    <property type="project" value="TreeGrafter"/>
</dbReference>
<dbReference type="GO" id="GO:0006046">
    <property type="term" value="P:N-acetylglucosamine catabolic process"/>
    <property type="evidence" value="ECO:0007669"/>
    <property type="project" value="TreeGrafter"/>
</dbReference>
<dbReference type="GO" id="GO:0019262">
    <property type="term" value="P:N-acetylneuraminate catabolic process"/>
    <property type="evidence" value="ECO:0007669"/>
    <property type="project" value="UniProtKB-UniRule"/>
</dbReference>
<dbReference type="CDD" id="cd01399">
    <property type="entry name" value="GlcN6P_deaminase"/>
    <property type="match status" value="1"/>
</dbReference>
<dbReference type="FunFam" id="3.40.50.1360:FF:000003">
    <property type="entry name" value="Glucosamine-6-phosphate deaminase"/>
    <property type="match status" value="1"/>
</dbReference>
<dbReference type="Gene3D" id="3.40.50.1360">
    <property type="match status" value="1"/>
</dbReference>
<dbReference type="HAMAP" id="MF_01241">
    <property type="entry name" value="GlcN6P_deamin"/>
    <property type="match status" value="1"/>
</dbReference>
<dbReference type="InterPro" id="IPR006148">
    <property type="entry name" value="Glc/Gal-6P_isomerase"/>
</dbReference>
<dbReference type="InterPro" id="IPR004547">
    <property type="entry name" value="Glucosamine6P_isomerase"/>
</dbReference>
<dbReference type="InterPro" id="IPR018321">
    <property type="entry name" value="Glucosamine6P_isomerase_CS"/>
</dbReference>
<dbReference type="InterPro" id="IPR037171">
    <property type="entry name" value="NagB/RpiA_transferase-like"/>
</dbReference>
<dbReference type="NCBIfam" id="TIGR00502">
    <property type="entry name" value="nagB"/>
    <property type="match status" value="1"/>
</dbReference>
<dbReference type="PANTHER" id="PTHR11280">
    <property type="entry name" value="GLUCOSAMINE-6-PHOSPHATE ISOMERASE"/>
    <property type="match status" value="1"/>
</dbReference>
<dbReference type="PANTHER" id="PTHR11280:SF5">
    <property type="entry name" value="GLUCOSAMINE-6-PHOSPHATE ISOMERASE"/>
    <property type="match status" value="1"/>
</dbReference>
<dbReference type="Pfam" id="PF01182">
    <property type="entry name" value="Glucosamine_iso"/>
    <property type="match status" value="1"/>
</dbReference>
<dbReference type="SUPFAM" id="SSF100950">
    <property type="entry name" value="NagB/RpiA/CoA transferase-like"/>
    <property type="match status" value="1"/>
</dbReference>
<dbReference type="PROSITE" id="PS01161">
    <property type="entry name" value="GLC_GALNAC_ISOMERASE"/>
    <property type="match status" value="1"/>
</dbReference>
<name>NAGB_PEDPA</name>
<organism>
    <name type="scientific">Pediococcus pentosaceus (strain ATCC 25745 / CCUG 21536 / LMG 10740 / 183-1w)</name>
    <dbReference type="NCBI Taxonomy" id="278197"/>
    <lineage>
        <taxon>Bacteria</taxon>
        <taxon>Bacillati</taxon>
        <taxon>Bacillota</taxon>
        <taxon>Bacilli</taxon>
        <taxon>Lactobacillales</taxon>
        <taxon>Lactobacillaceae</taxon>
        <taxon>Pediococcus</taxon>
    </lineage>
</organism>
<feature type="chain" id="PRO_1000067007" description="Glucosamine-6-phosphate deaminase">
    <location>
        <begin position="1"/>
        <end position="236"/>
    </location>
</feature>
<feature type="active site" description="Proton acceptor; for enolization step" evidence="1">
    <location>
        <position position="62"/>
    </location>
</feature>
<feature type="active site" description="For ring-opening step" evidence="1">
    <location>
        <position position="128"/>
    </location>
</feature>
<feature type="active site" description="Proton acceptor; for ring-opening step" evidence="1">
    <location>
        <position position="130"/>
    </location>
</feature>
<feature type="active site" description="For ring-opening step" evidence="1">
    <location>
        <position position="135"/>
    </location>
</feature>
<sequence>MKVIIVKDNVEGGKEGYKLFADAKKNGATTFGLATGSTPITTYQEIIKSDLDFTDSISINLDEYVGLPEDSDQSYDYFMHENLFNAKPFKHSYLPNGRAADLEAEAKHYDQIIEDNPIDLQILGIGRNGHIGFNEPGTPADSTTHKVSLTQSTIDANARFFEHEEDVPRYAISMGLASIMKSKHILIEAYGEDKADAIKGMIEGPVTTDLPASVLQNHDNVTVIIDEAAASKLSNK</sequence>
<proteinExistence type="inferred from homology"/>